<name>IF2_XANCB</name>
<accession>B0RRB4</accession>
<reference key="1">
    <citation type="journal article" date="2008" name="J. Biotechnol.">
        <title>The genome of Xanthomonas campestris pv. campestris B100 and its use for the reconstruction of metabolic pathways involved in xanthan biosynthesis.</title>
        <authorList>
            <person name="Vorhoelter F.-J."/>
            <person name="Schneiker S."/>
            <person name="Goesmann A."/>
            <person name="Krause L."/>
            <person name="Bekel T."/>
            <person name="Kaiser O."/>
            <person name="Linke B."/>
            <person name="Patschkowski T."/>
            <person name="Rueckert C."/>
            <person name="Schmid J."/>
            <person name="Sidhu V.K."/>
            <person name="Sieber V."/>
            <person name="Tauch A."/>
            <person name="Watt S.A."/>
            <person name="Weisshaar B."/>
            <person name="Becker A."/>
            <person name="Niehaus K."/>
            <person name="Puehler A."/>
        </authorList>
    </citation>
    <scope>NUCLEOTIDE SEQUENCE [LARGE SCALE GENOMIC DNA]</scope>
    <source>
        <strain>B100</strain>
    </source>
</reference>
<keyword id="KW-0963">Cytoplasm</keyword>
<keyword id="KW-0342">GTP-binding</keyword>
<keyword id="KW-0396">Initiation factor</keyword>
<keyword id="KW-0547">Nucleotide-binding</keyword>
<keyword id="KW-0648">Protein biosynthesis</keyword>
<feature type="chain" id="PRO_0000335520" description="Translation initiation factor IF-2">
    <location>
        <begin position="1"/>
        <end position="916"/>
    </location>
</feature>
<feature type="domain" description="tr-type G">
    <location>
        <begin position="415"/>
        <end position="584"/>
    </location>
</feature>
<feature type="region of interest" description="Disordered" evidence="3">
    <location>
        <begin position="151"/>
        <end position="262"/>
    </location>
</feature>
<feature type="region of interest" description="Disordered" evidence="3">
    <location>
        <begin position="280"/>
        <end position="328"/>
    </location>
</feature>
<feature type="region of interest" description="G1" evidence="1">
    <location>
        <begin position="424"/>
        <end position="431"/>
    </location>
</feature>
<feature type="region of interest" description="G2" evidence="1">
    <location>
        <begin position="449"/>
        <end position="453"/>
    </location>
</feature>
<feature type="region of interest" description="G3" evidence="1">
    <location>
        <begin position="470"/>
        <end position="473"/>
    </location>
</feature>
<feature type="region of interest" description="G4" evidence="1">
    <location>
        <begin position="524"/>
        <end position="527"/>
    </location>
</feature>
<feature type="region of interest" description="G5" evidence="1">
    <location>
        <begin position="560"/>
        <end position="562"/>
    </location>
</feature>
<feature type="compositionally biased region" description="Basic and acidic residues" evidence="3">
    <location>
        <begin position="151"/>
        <end position="191"/>
    </location>
</feature>
<feature type="compositionally biased region" description="Low complexity" evidence="3">
    <location>
        <begin position="192"/>
        <end position="243"/>
    </location>
</feature>
<feature type="compositionally biased region" description="Low complexity" evidence="3">
    <location>
        <begin position="293"/>
        <end position="305"/>
    </location>
</feature>
<feature type="binding site" evidence="2">
    <location>
        <begin position="424"/>
        <end position="431"/>
    </location>
    <ligand>
        <name>GTP</name>
        <dbReference type="ChEBI" id="CHEBI:37565"/>
    </ligand>
</feature>
<feature type="binding site" evidence="2">
    <location>
        <begin position="470"/>
        <end position="474"/>
    </location>
    <ligand>
        <name>GTP</name>
        <dbReference type="ChEBI" id="CHEBI:37565"/>
    </ligand>
</feature>
<feature type="binding site" evidence="2">
    <location>
        <begin position="524"/>
        <end position="527"/>
    </location>
    <ligand>
        <name>GTP</name>
        <dbReference type="ChEBI" id="CHEBI:37565"/>
    </ligand>
</feature>
<gene>
    <name evidence="2" type="primary">infB</name>
    <name type="ordered locus">xcc-b100_1649</name>
</gene>
<comment type="function">
    <text evidence="2">One of the essential components for the initiation of protein synthesis. Protects formylmethionyl-tRNA from spontaneous hydrolysis and promotes its binding to the 30S ribosomal subunits. Also involved in the hydrolysis of GTP during the formation of the 70S ribosomal complex.</text>
</comment>
<comment type="subcellular location">
    <subcellularLocation>
        <location evidence="2">Cytoplasm</location>
    </subcellularLocation>
</comment>
<comment type="similarity">
    <text evidence="2">Belongs to the TRAFAC class translation factor GTPase superfamily. Classic translation factor GTPase family. IF-2 subfamily.</text>
</comment>
<evidence type="ECO:0000250" key="1"/>
<evidence type="ECO:0000255" key="2">
    <source>
        <dbReference type="HAMAP-Rule" id="MF_00100"/>
    </source>
</evidence>
<evidence type="ECO:0000256" key="3">
    <source>
        <dbReference type="SAM" id="MobiDB-lite"/>
    </source>
</evidence>
<sequence length="916" mass="97592">MLWARGRQPDHRIRMSQQTTIRKLAELVNTPVDKLLVQLAEAGMKFSGPDQVVTSTEKMKLLGFLRRTHGKADTPAEAASEAAKKITLNRRKLQEVTVNAGRTKTTVNVEVRQKRTYVKSDNEGSGRAAPMTPDEERADILAKLAASRQRNLDEQQRLAESDRARDEAIQRKRDEEQAAKDRVEAERKAAEEAAAAASAPAPVAAAPAPSSAPAARAPSSPSSAPRPARPAGASPASRPATPARPDDRNNAAKHKTRGSHVMVAGVEDDDATKRFAGQLHLSAADRARRSNVRGKPTGRPGSSSSRRNDGGRGSNQSNSGPHGFERPTAPVVREVAIGETITVADLAQKLALKGGDVVKALFKMGVMATITQSIDHDTAALVTEELGHKAVRADNADFEDALLAHAEDAQGETTSRPPVVTIMGHVDHGKTSLLDYIRRTKIASGEAGGITQHIGAYHVETGRGVISFLDTPGHAAFTSMRARGAKITDIVVLVVAADDGVMPQTKEAVAHAKAAGVPLIVAVNKIDKAGADPLRVKNELLAENVVAEDFGGDTQFIEVSAKVGTGVDTLLDAISLQAEVLELKAVADGRASGTVIESSLDKGRGPVATVLVQQGALKRGDYLVCGIQYGRVRALFDETGHQPASAGPSIPVQVLGLSGVPEAGDDFVVVDDERLAKDVAQQRETKRRESRLVASATNRMEDILAQMGKGEGQQVLNLVIKADVQGSVEALKQSLVALSNDDIRINVIHSGVGGITESDANSAAASKATIIGFNVRADASARKIVESNGIDLRYFSIIYDVIDQVKQVASGLLGVEIREEIIGIAQVRDVFRSSKFGAVAGCMIIEGVVKRSKPIRVLRDSVVVFEGELESLRRFKENVDEVRNGTECGIGVKAYNDVKAGDQIECFERIEVARTL</sequence>
<protein>
    <recommendedName>
        <fullName evidence="2">Translation initiation factor IF-2</fullName>
    </recommendedName>
</protein>
<proteinExistence type="inferred from homology"/>
<organism>
    <name type="scientific">Xanthomonas campestris pv. campestris (strain B100)</name>
    <dbReference type="NCBI Taxonomy" id="509169"/>
    <lineage>
        <taxon>Bacteria</taxon>
        <taxon>Pseudomonadati</taxon>
        <taxon>Pseudomonadota</taxon>
        <taxon>Gammaproteobacteria</taxon>
        <taxon>Lysobacterales</taxon>
        <taxon>Lysobacteraceae</taxon>
        <taxon>Xanthomonas</taxon>
    </lineage>
</organism>
<dbReference type="EMBL" id="AM920689">
    <property type="protein sequence ID" value="CAP50999.1"/>
    <property type="molecule type" value="Genomic_DNA"/>
</dbReference>
<dbReference type="SMR" id="B0RRB4"/>
<dbReference type="KEGG" id="xca:xcc-b100_1649"/>
<dbReference type="HOGENOM" id="CLU_006301_6_0_6"/>
<dbReference type="Proteomes" id="UP000001188">
    <property type="component" value="Chromosome"/>
</dbReference>
<dbReference type="GO" id="GO:0005829">
    <property type="term" value="C:cytosol"/>
    <property type="evidence" value="ECO:0007669"/>
    <property type="project" value="TreeGrafter"/>
</dbReference>
<dbReference type="GO" id="GO:0005525">
    <property type="term" value="F:GTP binding"/>
    <property type="evidence" value="ECO:0007669"/>
    <property type="project" value="UniProtKB-KW"/>
</dbReference>
<dbReference type="GO" id="GO:0003924">
    <property type="term" value="F:GTPase activity"/>
    <property type="evidence" value="ECO:0007669"/>
    <property type="project" value="UniProtKB-UniRule"/>
</dbReference>
<dbReference type="GO" id="GO:0097216">
    <property type="term" value="F:guanosine tetraphosphate binding"/>
    <property type="evidence" value="ECO:0007669"/>
    <property type="project" value="UniProtKB-ARBA"/>
</dbReference>
<dbReference type="GO" id="GO:0003743">
    <property type="term" value="F:translation initiation factor activity"/>
    <property type="evidence" value="ECO:0007669"/>
    <property type="project" value="UniProtKB-UniRule"/>
</dbReference>
<dbReference type="CDD" id="cd01887">
    <property type="entry name" value="IF2_eIF5B"/>
    <property type="match status" value="1"/>
</dbReference>
<dbReference type="CDD" id="cd03702">
    <property type="entry name" value="IF2_mtIF2_II"/>
    <property type="match status" value="1"/>
</dbReference>
<dbReference type="CDD" id="cd03692">
    <property type="entry name" value="mtIF2_IVc"/>
    <property type="match status" value="1"/>
</dbReference>
<dbReference type="FunFam" id="2.40.30.10:FF:000008">
    <property type="entry name" value="Translation initiation factor IF-2"/>
    <property type="match status" value="1"/>
</dbReference>
<dbReference type="FunFam" id="2.40.30.10:FF:000054">
    <property type="entry name" value="Translation initiation factor IF-2"/>
    <property type="match status" value="1"/>
</dbReference>
<dbReference type="FunFam" id="3.40.50.10050:FF:000001">
    <property type="entry name" value="Translation initiation factor IF-2"/>
    <property type="match status" value="1"/>
</dbReference>
<dbReference type="FunFam" id="3.40.50.300:FF:000019">
    <property type="entry name" value="Translation initiation factor IF-2"/>
    <property type="match status" value="1"/>
</dbReference>
<dbReference type="Gene3D" id="3.40.50.300">
    <property type="entry name" value="P-loop containing nucleotide triphosphate hydrolases"/>
    <property type="match status" value="1"/>
</dbReference>
<dbReference type="Gene3D" id="3.30.56.50">
    <property type="entry name" value="Putative DNA-binding domain, N-terminal subdomain of bacterial translation initiation factor IF2"/>
    <property type="match status" value="1"/>
</dbReference>
<dbReference type="Gene3D" id="2.40.30.10">
    <property type="entry name" value="Translation factors"/>
    <property type="match status" value="2"/>
</dbReference>
<dbReference type="Gene3D" id="3.40.50.10050">
    <property type="entry name" value="Translation initiation factor IF- 2, domain 3"/>
    <property type="match status" value="1"/>
</dbReference>
<dbReference type="HAMAP" id="MF_00100_B">
    <property type="entry name" value="IF_2_B"/>
    <property type="match status" value="1"/>
</dbReference>
<dbReference type="InterPro" id="IPR009061">
    <property type="entry name" value="DNA-bd_dom_put_sf"/>
</dbReference>
<dbReference type="InterPro" id="IPR053905">
    <property type="entry name" value="EF-G-like_DII"/>
</dbReference>
<dbReference type="InterPro" id="IPR004161">
    <property type="entry name" value="EFTu-like_2"/>
</dbReference>
<dbReference type="InterPro" id="IPR013575">
    <property type="entry name" value="IF2_assoc_dom_bac"/>
</dbReference>
<dbReference type="InterPro" id="IPR044145">
    <property type="entry name" value="IF2_II"/>
</dbReference>
<dbReference type="InterPro" id="IPR006847">
    <property type="entry name" value="IF2_N"/>
</dbReference>
<dbReference type="InterPro" id="IPR027417">
    <property type="entry name" value="P-loop_NTPase"/>
</dbReference>
<dbReference type="InterPro" id="IPR005225">
    <property type="entry name" value="Small_GTP-bd"/>
</dbReference>
<dbReference type="InterPro" id="IPR000795">
    <property type="entry name" value="T_Tr_GTP-bd_dom"/>
</dbReference>
<dbReference type="InterPro" id="IPR000178">
    <property type="entry name" value="TF_IF2_bacterial-like"/>
</dbReference>
<dbReference type="InterPro" id="IPR015760">
    <property type="entry name" value="TIF_IF2"/>
</dbReference>
<dbReference type="InterPro" id="IPR023115">
    <property type="entry name" value="TIF_IF2_dom3"/>
</dbReference>
<dbReference type="InterPro" id="IPR036925">
    <property type="entry name" value="TIF_IF2_dom3_sf"/>
</dbReference>
<dbReference type="InterPro" id="IPR009000">
    <property type="entry name" value="Transl_B-barrel_sf"/>
</dbReference>
<dbReference type="NCBIfam" id="TIGR00487">
    <property type="entry name" value="IF-2"/>
    <property type="match status" value="1"/>
</dbReference>
<dbReference type="NCBIfam" id="TIGR00231">
    <property type="entry name" value="small_GTP"/>
    <property type="match status" value="1"/>
</dbReference>
<dbReference type="PANTHER" id="PTHR43381:SF5">
    <property type="entry name" value="TR-TYPE G DOMAIN-CONTAINING PROTEIN"/>
    <property type="match status" value="1"/>
</dbReference>
<dbReference type="PANTHER" id="PTHR43381">
    <property type="entry name" value="TRANSLATION INITIATION FACTOR IF-2-RELATED"/>
    <property type="match status" value="1"/>
</dbReference>
<dbReference type="Pfam" id="PF22042">
    <property type="entry name" value="EF-G_D2"/>
    <property type="match status" value="1"/>
</dbReference>
<dbReference type="Pfam" id="PF00009">
    <property type="entry name" value="GTP_EFTU"/>
    <property type="match status" value="1"/>
</dbReference>
<dbReference type="Pfam" id="PF03144">
    <property type="entry name" value="GTP_EFTU_D2"/>
    <property type="match status" value="1"/>
</dbReference>
<dbReference type="Pfam" id="PF11987">
    <property type="entry name" value="IF-2"/>
    <property type="match status" value="1"/>
</dbReference>
<dbReference type="Pfam" id="PF08364">
    <property type="entry name" value="IF2_assoc"/>
    <property type="match status" value="1"/>
</dbReference>
<dbReference type="Pfam" id="PF04760">
    <property type="entry name" value="IF2_N"/>
    <property type="match status" value="1"/>
</dbReference>
<dbReference type="SUPFAM" id="SSF52156">
    <property type="entry name" value="Initiation factor IF2/eIF5b, domain 3"/>
    <property type="match status" value="1"/>
</dbReference>
<dbReference type="SUPFAM" id="SSF52540">
    <property type="entry name" value="P-loop containing nucleoside triphosphate hydrolases"/>
    <property type="match status" value="1"/>
</dbReference>
<dbReference type="SUPFAM" id="SSF46955">
    <property type="entry name" value="Putative DNA-binding domain"/>
    <property type="match status" value="1"/>
</dbReference>
<dbReference type="SUPFAM" id="SSF50447">
    <property type="entry name" value="Translation proteins"/>
    <property type="match status" value="2"/>
</dbReference>
<dbReference type="PROSITE" id="PS51722">
    <property type="entry name" value="G_TR_2"/>
    <property type="match status" value="1"/>
</dbReference>
<dbReference type="PROSITE" id="PS01176">
    <property type="entry name" value="IF2"/>
    <property type="match status" value="1"/>
</dbReference>